<gene>
    <name type="primary">LSM1</name>
    <name type="synonym">CASM</name>
</gene>
<comment type="function">
    <text evidence="1 3">Plays a role in the degradation of histone mRNAs, the only eukaryotic mRNAs that are not polyadenylated (PubMed:18172165). Probably also part of an LSm subunits-containing complex involved in the general process of mRNA degradation (By similarity).</text>
</comment>
<comment type="subunit">
    <text evidence="1 3">Interacts with SLBP; interaction with SLBP occurs when histone mRNA is being rapidly degraded during the S phase (PubMed:18172165). LSm subunits form a heteromer with a donut shape (By similarity).</text>
</comment>
<comment type="interaction">
    <interactant intactId="EBI-347619">
        <id>O15116</id>
    </interactant>
    <interactant intactId="EBI-712648">
        <id>O95994</id>
        <label>AGR2</label>
    </interactant>
    <organismsDiffer>false</organismsDiffer>
    <experiments>3</experiments>
</comment>
<comment type="interaction">
    <interactant intactId="EBI-347619">
        <id>O15116</id>
    </interactant>
    <interactant intactId="EBI-3925742">
        <id>Q8TD06</id>
        <label>AGR3</label>
    </interactant>
    <organismsDiffer>false</organismsDiffer>
    <experiments>3</experiments>
</comment>
<comment type="interaction">
    <interactant intactId="EBI-347619">
        <id>O15116</id>
    </interactant>
    <interactant intactId="EBI-13307975">
        <id>O00213-2</id>
        <label>APBB1</label>
    </interactant>
    <organismsDiffer>false</organismsDiffer>
    <experiments>3</experiments>
</comment>
<comment type="interaction">
    <interactant intactId="EBI-347619">
        <id>O15116</id>
    </interactant>
    <interactant intactId="EBI-10243741">
        <id>Q5H9J7</id>
        <label>BEX5</label>
    </interactant>
    <organismsDiffer>false</organismsDiffer>
    <experiments>3</experiments>
</comment>
<comment type="interaction">
    <interactant intactId="EBI-347619">
        <id>O15116</id>
    </interactant>
    <interactant intactId="EBI-347404">
        <id>O00299</id>
        <label>CLIC1</label>
    </interactant>
    <organismsDiffer>false</organismsDiffer>
    <experiments>4</experiments>
</comment>
<comment type="interaction">
    <interactant intactId="EBI-347619">
        <id>O15116</id>
    </interactant>
    <interactant intactId="EBI-10200977">
        <id>P21964-2</id>
        <label>COMT</label>
    </interactant>
    <organismsDiffer>false</organismsDiffer>
    <experiments>3</experiments>
</comment>
<comment type="interaction">
    <interactant intactId="EBI-347619">
        <id>O15116</id>
    </interactant>
    <interactant intactId="EBI-12840152">
        <id>A0PJW8</id>
        <label>DAPL1</label>
    </interactant>
    <organismsDiffer>false</organismsDiffer>
    <experiments>3</experiments>
</comment>
<comment type="interaction">
    <interactant intactId="EBI-347619">
        <id>O15116</id>
    </interactant>
    <interactant intactId="EBI-752440">
        <id>O15217</id>
        <label>GSTA4</label>
    </interactant>
    <organismsDiffer>false</organismsDiffer>
    <experiments>3</experiments>
</comment>
<comment type="interaction">
    <interactant intactId="EBI-347619">
        <id>O15116</id>
    </interactant>
    <interactant intactId="EBI-347416">
        <id>Q9Y333</id>
        <label>LSM2</label>
    </interactant>
    <organismsDiffer>false</organismsDiffer>
    <experiments>13</experiments>
</comment>
<comment type="interaction">
    <interactant intactId="EBI-347619">
        <id>O15116</id>
    </interactant>
    <interactant intactId="EBI-348239">
        <id>P62310</id>
        <label>LSM3</label>
    </interactant>
    <organismsDiffer>false</organismsDiffer>
    <experiments>18</experiments>
</comment>
<comment type="interaction">
    <interactant intactId="EBI-347619">
        <id>O15116</id>
    </interactant>
    <interactant intactId="EBI-372521">
        <id>Q9Y4Z0</id>
        <label>LSM4</label>
    </interactant>
    <organismsDiffer>false</organismsDiffer>
    <experiments>6</experiments>
</comment>
<comment type="interaction">
    <interactant intactId="EBI-347619">
        <id>O15116</id>
    </interactant>
    <interactant intactId="EBI-373310">
        <id>P62312</id>
        <label>LSM6</label>
    </interactant>
    <organismsDiffer>false</organismsDiffer>
    <experiments>6</experiments>
</comment>
<comment type="interaction">
    <interactant intactId="EBI-347619">
        <id>O15116</id>
    </interactant>
    <interactant intactId="EBI-11987923">
        <id>P59942</id>
        <label>MCCD1</label>
    </interactant>
    <organismsDiffer>false</organismsDiffer>
    <experiments>3</experiments>
</comment>
<comment type="interaction">
    <interactant intactId="EBI-347619">
        <id>O15116</id>
    </interactant>
    <interactant intactId="EBI-2562092">
        <id>Q86TB9</id>
        <label>PATL1</label>
    </interactant>
    <organismsDiffer>false</organismsDiffer>
    <experiments>19</experiments>
</comment>
<comment type="interaction">
    <interactant intactId="EBI-347619">
        <id>O15116</id>
    </interactant>
    <interactant intactId="EBI-357828">
        <id>P28074</id>
        <label>PSMB5</label>
    </interactant>
    <organismsDiffer>false</organismsDiffer>
    <experiments>4</experiments>
</comment>
<comment type="interaction">
    <interactant intactId="EBI-347619">
        <id>O15116</id>
    </interactant>
    <interactant intactId="EBI-372312">
        <id>P28062-2</id>
        <label>PSMB8</label>
    </interactant>
    <organismsDiffer>false</organismsDiffer>
    <experiments>3</experiments>
</comment>
<comment type="interaction">
    <interactant intactId="EBI-347619">
        <id>O15116</id>
    </interactant>
    <interactant intactId="EBI-727338">
        <id>O95988</id>
        <label>TCL1B</label>
    </interactant>
    <organismsDiffer>false</organismsDiffer>
    <experiments>3</experiments>
</comment>
<comment type="subcellular location">
    <subcellularLocation>
        <location evidence="5">Cytoplasm</location>
    </subcellularLocation>
    <subcellularLocation>
        <location evidence="5">Cytoplasm</location>
        <location evidence="5">P-body</location>
    </subcellularLocation>
</comment>
<comment type="similarity">
    <text evidence="4">Belongs to the snRNP Sm proteins family.</text>
</comment>
<accession>O15116</accession>
<accession>B2R5E6</accession>
<keyword id="KW-0963">Cytoplasm</keyword>
<keyword id="KW-0507">mRNA processing</keyword>
<keyword id="KW-0508">mRNA splicing</keyword>
<keyword id="KW-0597">Phosphoprotein</keyword>
<keyword id="KW-1267">Proteomics identification</keyword>
<keyword id="KW-1185">Reference proteome</keyword>
<keyword id="KW-0687">Ribonucleoprotein</keyword>
<keyword id="KW-0694">RNA-binding</keyword>
<evidence type="ECO:0000250" key="1">
    <source>
        <dbReference type="UniProtKB" id="P47017"/>
    </source>
</evidence>
<evidence type="ECO:0000255" key="2">
    <source>
        <dbReference type="PROSITE-ProRule" id="PRU01346"/>
    </source>
</evidence>
<evidence type="ECO:0000269" key="3">
    <source>
    </source>
</evidence>
<evidence type="ECO:0000305" key="4"/>
<evidence type="ECO:0000305" key="5">
    <source>
    </source>
</evidence>
<evidence type="ECO:0007744" key="6">
    <source>
    </source>
</evidence>
<protein>
    <recommendedName>
        <fullName>U6 snRNA-associated Sm-like protein LSm1</fullName>
    </recommendedName>
    <alternativeName>
        <fullName>Cancer-associated Sm-like</fullName>
    </alternativeName>
    <alternativeName>
        <fullName>Small nuclear ribonuclear CaSm</fullName>
    </alternativeName>
</protein>
<proteinExistence type="evidence at protein level"/>
<feature type="chain" id="PRO_0000125554" description="U6 snRNA-associated Sm-like protein LSm1">
    <location>
        <begin position="1"/>
        <end position="133"/>
    </location>
</feature>
<feature type="domain" description="Sm" evidence="2">
    <location>
        <begin position="5"/>
        <end position="80"/>
    </location>
</feature>
<feature type="modified residue" description="Phosphoserine" evidence="6">
    <location>
        <position position="123"/>
    </location>
</feature>
<feature type="modified residue" description="Phosphothreonine" evidence="6">
    <location>
        <position position="129"/>
    </location>
</feature>
<sequence>MNYMPGTASLIEDIDKKHLVLLRDGRTLIGFLRSIDQFANLVLHQTVERIHVGKKYGDIPRGIFVVRGENVVLLGEIDLEKESDTPLQQVSIEEILEEQRVEQQTKLEAEKLKVQALKDRGLSIPRADTLDEY</sequence>
<reference key="1">
    <citation type="journal article" date="1997" name="Cancer Res.">
        <title>CaSm: an Sm-like protein that contributes to the transformed state in cancer cells.</title>
        <authorList>
            <person name="Schweinfest C.W."/>
            <person name="Graber M.W."/>
            <person name="Chapman J.M."/>
            <person name="Papas T.S."/>
            <person name="Baron P.L."/>
            <person name="Watson D.K."/>
        </authorList>
    </citation>
    <scope>NUCLEOTIDE SEQUENCE [MRNA]</scope>
</reference>
<reference key="2">
    <citation type="journal article" date="1999" name="EMBO J.">
        <title>Sm and Sm-like proteins assemble in two related complexes of deep evolutionary origin.</title>
        <authorList>
            <person name="Salgado-Garrido J."/>
            <person name="Bragado-Nilsson E."/>
            <person name="Kandels-Lewis S."/>
            <person name="Seraphin B."/>
        </authorList>
    </citation>
    <scope>NUCLEOTIDE SEQUENCE [MRNA]</scope>
    <source>
        <tissue>Lymph node</tissue>
    </source>
</reference>
<reference key="3">
    <citation type="journal article" date="2004" name="Nat. Genet.">
        <title>Complete sequencing and characterization of 21,243 full-length human cDNAs.</title>
        <authorList>
            <person name="Ota T."/>
            <person name="Suzuki Y."/>
            <person name="Nishikawa T."/>
            <person name="Otsuki T."/>
            <person name="Sugiyama T."/>
            <person name="Irie R."/>
            <person name="Wakamatsu A."/>
            <person name="Hayashi K."/>
            <person name="Sato H."/>
            <person name="Nagai K."/>
            <person name="Kimura K."/>
            <person name="Makita H."/>
            <person name="Sekine M."/>
            <person name="Obayashi M."/>
            <person name="Nishi T."/>
            <person name="Shibahara T."/>
            <person name="Tanaka T."/>
            <person name="Ishii S."/>
            <person name="Yamamoto J."/>
            <person name="Saito K."/>
            <person name="Kawai Y."/>
            <person name="Isono Y."/>
            <person name="Nakamura Y."/>
            <person name="Nagahari K."/>
            <person name="Murakami K."/>
            <person name="Yasuda T."/>
            <person name="Iwayanagi T."/>
            <person name="Wagatsuma M."/>
            <person name="Shiratori A."/>
            <person name="Sudo H."/>
            <person name="Hosoiri T."/>
            <person name="Kaku Y."/>
            <person name="Kodaira H."/>
            <person name="Kondo H."/>
            <person name="Sugawara M."/>
            <person name="Takahashi M."/>
            <person name="Kanda K."/>
            <person name="Yokoi T."/>
            <person name="Furuya T."/>
            <person name="Kikkawa E."/>
            <person name="Omura Y."/>
            <person name="Abe K."/>
            <person name="Kamihara K."/>
            <person name="Katsuta N."/>
            <person name="Sato K."/>
            <person name="Tanikawa M."/>
            <person name="Yamazaki M."/>
            <person name="Ninomiya K."/>
            <person name="Ishibashi T."/>
            <person name="Yamashita H."/>
            <person name="Murakawa K."/>
            <person name="Fujimori K."/>
            <person name="Tanai H."/>
            <person name="Kimata M."/>
            <person name="Watanabe M."/>
            <person name="Hiraoka S."/>
            <person name="Chiba Y."/>
            <person name="Ishida S."/>
            <person name="Ono Y."/>
            <person name="Takiguchi S."/>
            <person name="Watanabe S."/>
            <person name="Yosida M."/>
            <person name="Hotuta T."/>
            <person name="Kusano J."/>
            <person name="Kanehori K."/>
            <person name="Takahashi-Fujii A."/>
            <person name="Hara H."/>
            <person name="Tanase T.-O."/>
            <person name="Nomura Y."/>
            <person name="Togiya S."/>
            <person name="Komai F."/>
            <person name="Hara R."/>
            <person name="Takeuchi K."/>
            <person name="Arita M."/>
            <person name="Imose N."/>
            <person name="Musashino K."/>
            <person name="Yuuki H."/>
            <person name="Oshima A."/>
            <person name="Sasaki N."/>
            <person name="Aotsuka S."/>
            <person name="Yoshikawa Y."/>
            <person name="Matsunawa H."/>
            <person name="Ichihara T."/>
            <person name="Shiohata N."/>
            <person name="Sano S."/>
            <person name="Moriya S."/>
            <person name="Momiyama H."/>
            <person name="Satoh N."/>
            <person name="Takami S."/>
            <person name="Terashima Y."/>
            <person name="Suzuki O."/>
            <person name="Nakagawa S."/>
            <person name="Senoh A."/>
            <person name="Mizoguchi H."/>
            <person name="Goto Y."/>
            <person name="Shimizu F."/>
            <person name="Wakebe H."/>
            <person name="Hishigaki H."/>
            <person name="Watanabe T."/>
            <person name="Sugiyama A."/>
            <person name="Takemoto M."/>
            <person name="Kawakami B."/>
            <person name="Yamazaki M."/>
            <person name="Watanabe K."/>
            <person name="Kumagai A."/>
            <person name="Itakura S."/>
            <person name="Fukuzumi Y."/>
            <person name="Fujimori Y."/>
            <person name="Komiyama M."/>
            <person name="Tashiro H."/>
            <person name="Tanigami A."/>
            <person name="Fujiwara T."/>
            <person name="Ono T."/>
            <person name="Yamada K."/>
            <person name="Fujii Y."/>
            <person name="Ozaki K."/>
            <person name="Hirao M."/>
            <person name="Ohmori Y."/>
            <person name="Kawabata A."/>
            <person name="Hikiji T."/>
            <person name="Kobatake N."/>
            <person name="Inagaki H."/>
            <person name="Ikema Y."/>
            <person name="Okamoto S."/>
            <person name="Okitani R."/>
            <person name="Kawakami T."/>
            <person name="Noguchi S."/>
            <person name="Itoh T."/>
            <person name="Shigeta K."/>
            <person name="Senba T."/>
            <person name="Matsumura K."/>
            <person name="Nakajima Y."/>
            <person name="Mizuno T."/>
            <person name="Morinaga M."/>
            <person name="Sasaki M."/>
            <person name="Togashi T."/>
            <person name="Oyama M."/>
            <person name="Hata H."/>
            <person name="Watanabe M."/>
            <person name="Komatsu T."/>
            <person name="Mizushima-Sugano J."/>
            <person name="Satoh T."/>
            <person name="Shirai Y."/>
            <person name="Takahashi Y."/>
            <person name="Nakagawa K."/>
            <person name="Okumura K."/>
            <person name="Nagase T."/>
            <person name="Nomura N."/>
            <person name="Kikuchi H."/>
            <person name="Masuho Y."/>
            <person name="Yamashita R."/>
            <person name="Nakai K."/>
            <person name="Yada T."/>
            <person name="Nakamura Y."/>
            <person name="Ohara O."/>
            <person name="Isogai T."/>
            <person name="Sugano S."/>
        </authorList>
    </citation>
    <scope>NUCLEOTIDE SEQUENCE [LARGE SCALE MRNA]</scope>
    <source>
        <tissue>Substantia nigra</tissue>
    </source>
</reference>
<reference key="4">
    <citation type="submission" date="2005-09" db="EMBL/GenBank/DDBJ databases">
        <authorList>
            <person name="Mural R.J."/>
            <person name="Istrail S."/>
            <person name="Sutton G.G."/>
            <person name="Florea L."/>
            <person name="Halpern A.L."/>
            <person name="Mobarry C.M."/>
            <person name="Lippert R."/>
            <person name="Walenz B."/>
            <person name="Shatkay H."/>
            <person name="Dew I."/>
            <person name="Miller J.R."/>
            <person name="Flanigan M.J."/>
            <person name="Edwards N.J."/>
            <person name="Bolanos R."/>
            <person name="Fasulo D."/>
            <person name="Halldorsson B.V."/>
            <person name="Hannenhalli S."/>
            <person name="Turner R."/>
            <person name="Yooseph S."/>
            <person name="Lu F."/>
            <person name="Nusskern D.R."/>
            <person name="Shue B.C."/>
            <person name="Zheng X.H."/>
            <person name="Zhong F."/>
            <person name="Delcher A.L."/>
            <person name="Huson D.H."/>
            <person name="Kravitz S.A."/>
            <person name="Mouchard L."/>
            <person name="Reinert K."/>
            <person name="Remington K.A."/>
            <person name="Clark A.G."/>
            <person name="Waterman M.S."/>
            <person name="Eichler E.E."/>
            <person name="Adams M.D."/>
            <person name="Hunkapiller M.W."/>
            <person name="Myers E.W."/>
            <person name="Venter J.C."/>
        </authorList>
    </citation>
    <scope>NUCLEOTIDE SEQUENCE [LARGE SCALE GENOMIC DNA]</scope>
</reference>
<reference key="5">
    <citation type="journal article" date="2004" name="Genome Res.">
        <title>The status, quality, and expansion of the NIH full-length cDNA project: the Mammalian Gene Collection (MGC).</title>
        <authorList>
            <consortium name="The MGC Project Team"/>
        </authorList>
    </citation>
    <scope>NUCLEOTIDE SEQUENCE [LARGE SCALE MRNA]</scope>
    <source>
        <tissue>Eye</tissue>
    </source>
</reference>
<reference key="6">
    <citation type="journal article" date="2008" name="Genes Dev.">
        <title>Degradation of histone mRNA requires oligouridylation followed by decapping and simultaneous degradation of the mRNA both 5' to 3' and 3' to 5'.</title>
        <authorList>
            <person name="Mullen T.E."/>
            <person name="Marzluff W.F."/>
        </authorList>
    </citation>
    <scope>FUNCTION IN HISTONE MRNA DEGRADATION ACTIVITY</scope>
    <scope>INTERACTION WITH SLBP</scope>
    <scope>SUBCELLULAR LOCATION</scope>
</reference>
<reference key="7">
    <citation type="journal article" date="2013" name="J. Proteome Res.">
        <title>Toward a comprehensive characterization of a human cancer cell phosphoproteome.</title>
        <authorList>
            <person name="Zhou H."/>
            <person name="Di Palma S."/>
            <person name="Preisinger C."/>
            <person name="Peng M."/>
            <person name="Polat A.N."/>
            <person name="Heck A.J."/>
            <person name="Mohammed S."/>
        </authorList>
    </citation>
    <scope>PHOSPHORYLATION [LARGE SCALE ANALYSIS] AT SER-123 AND THR-129</scope>
    <scope>IDENTIFICATION BY MASS SPECTROMETRY [LARGE SCALE ANALYSIS]</scope>
    <source>
        <tissue>Erythroleukemia</tissue>
    </source>
</reference>
<name>LSM1_HUMAN</name>
<dbReference type="EMBL" id="AF000177">
    <property type="protein sequence ID" value="AAB62189.1"/>
    <property type="molecule type" value="mRNA"/>
</dbReference>
<dbReference type="EMBL" id="AJ238094">
    <property type="protein sequence ID" value="CAB45865.1"/>
    <property type="molecule type" value="mRNA"/>
</dbReference>
<dbReference type="EMBL" id="AK312159">
    <property type="protein sequence ID" value="BAG35093.1"/>
    <property type="molecule type" value="mRNA"/>
</dbReference>
<dbReference type="EMBL" id="CH471080">
    <property type="protein sequence ID" value="EAW63332.1"/>
    <property type="molecule type" value="Genomic_DNA"/>
</dbReference>
<dbReference type="EMBL" id="BC001767">
    <property type="protein sequence ID" value="AAH01767.1"/>
    <property type="molecule type" value="mRNA"/>
</dbReference>
<dbReference type="CCDS" id="CCDS6103.1"/>
<dbReference type="RefSeq" id="NP_055277.1">
    <property type="nucleotide sequence ID" value="NM_014462.3"/>
</dbReference>
<dbReference type="SMR" id="O15116"/>
<dbReference type="BioGRID" id="118104">
    <property type="interactions" value="99"/>
</dbReference>
<dbReference type="CORUM" id="O15116"/>
<dbReference type="DIP" id="DIP-31130N"/>
<dbReference type="FunCoup" id="O15116">
    <property type="interactions" value="2986"/>
</dbReference>
<dbReference type="IntAct" id="O15116">
    <property type="interactions" value="55"/>
</dbReference>
<dbReference type="MINT" id="O15116"/>
<dbReference type="STRING" id="9606.ENSP00000310596"/>
<dbReference type="GlyGen" id="O15116">
    <property type="glycosylation" value="1 site, 1 O-linked glycan (1 site)"/>
</dbReference>
<dbReference type="iPTMnet" id="O15116"/>
<dbReference type="PhosphoSitePlus" id="O15116"/>
<dbReference type="BioMuta" id="LSM1"/>
<dbReference type="jPOST" id="O15116"/>
<dbReference type="MassIVE" id="O15116"/>
<dbReference type="PaxDb" id="9606-ENSP00000310596"/>
<dbReference type="PeptideAtlas" id="O15116"/>
<dbReference type="ProteomicsDB" id="48450"/>
<dbReference type="Pumba" id="O15116"/>
<dbReference type="TopDownProteomics" id="O15116"/>
<dbReference type="Antibodypedia" id="10914">
    <property type="antibodies" value="326 antibodies from 30 providers"/>
</dbReference>
<dbReference type="DNASU" id="27257"/>
<dbReference type="Ensembl" id="ENST00000311351.9">
    <property type="protein sequence ID" value="ENSP00000310596.4"/>
    <property type="gene ID" value="ENSG00000175324.10"/>
</dbReference>
<dbReference type="GeneID" id="27257"/>
<dbReference type="KEGG" id="hsa:27257"/>
<dbReference type="MANE-Select" id="ENST00000311351.9">
    <property type="protein sequence ID" value="ENSP00000310596.4"/>
    <property type="RefSeq nucleotide sequence ID" value="NM_014462.3"/>
    <property type="RefSeq protein sequence ID" value="NP_055277.1"/>
</dbReference>
<dbReference type="UCSC" id="uc003xkw.4">
    <property type="organism name" value="human"/>
</dbReference>
<dbReference type="AGR" id="HGNC:20472"/>
<dbReference type="CTD" id="27257"/>
<dbReference type="DisGeNET" id="27257"/>
<dbReference type="GeneCards" id="LSM1"/>
<dbReference type="HGNC" id="HGNC:20472">
    <property type="gene designation" value="LSM1"/>
</dbReference>
<dbReference type="HPA" id="ENSG00000175324">
    <property type="expression patterns" value="Low tissue specificity"/>
</dbReference>
<dbReference type="MIM" id="607281">
    <property type="type" value="gene"/>
</dbReference>
<dbReference type="neXtProt" id="NX_O15116"/>
<dbReference type="OpenTargets" id="ENSG00000175324"/>
<dbReference type="PharmGKB" id="PA134864226"/>
<dbReference type="VEuPathDB" id="HostDB:ENSG00000175324"/>
<dbReference type="eggNOG" id="KOG1782">
    <property type="taxonomic scope" value="Eukaryota"/>
</dbReference>
<dbReference type="GeneTree" id="ENSGT00730000111133"/>
<dbReference type="HOGENOM" id="CLU_076902_0_1_1"/>
<dbReference type="InParanoid" id="O15116"/>
<dbReference type="OMA" id="IGYLRCV"/>
<dbReference type="OrthoDB" id="422364at2759"/>
<dbReference type="PAN-GO" id="O15116">
    <property type="GO annotations" value="4 GO annotations based on evolutionary models"/>
</dbReference>
<dbReference type="PhylomeDB" id="O15116"/>
<dbReference type="TreeFam" id="TF105846"/>
<dbReference type="PathwayCommons" id="O15116"/>
<dbReference type="Reactome" id="R-HSA-430039">
    <property type="pathway name" value="mRNA decay by 5' to 3' exoribonuclease"/>
</dbReference>
<dbReference type="SignaLink" id="O15116"/>
<dbReference type="BioGRID-ORCS" id="27257">
    <property type="hits" value="19 hits in 1132 CRISPR screens"/>
</dbReference>
<dbReference type="CD-CODE" id="232F8A39">
    <property type="entry name" value="P-body"/>
</dbReference>
<dbReference type="CD-CODE" id="DEE660B4">
    <property type="entry name" value="Stress granule"/>
</dbReference>
<dbReference type="ChiTaRS" id="LSM1">
    <property type="organism name" value="human"/>
</dbReference>
<dbReference type="GeneWiki" id="LSM1"/>
<dbReference type="GenomeRNAi" id="27257"/>
<dbReference type="Pharos" id="O15116">
    <property type="development level" value="Tbio"/>
</dbReference>
<dbReference type="PRO" id="PR:O15116"/>
<dbReference type="Proteomes" id="UP000005640">
    <property type="component" value="Chromosome 8"/>
</dbReference>
<dbReference type="RNAct" id="O15116">
    <property type="molecule type" value="protein"/>
</dbReference>
<dbReference type="Bgee" id="ENSG00000175324">
    <property type="expression patterns" value="Expressed in parotid gland and 211 other cell types or tissues"/>
</dbReference>
<dbReference type="ExpressionAtlas" id="O15116">
    <property type="expression patterns" value="baseline and differential"/>
</dbReference>
<dbReference type="GO" id="GO:0005737">
    <property type="term" value="C:cytoplasm"/>
    <property type="evidence" value="ECO:0000314"/>
    <property type="project" value="MGI"/>
</dbReference>
<dbReference type="GO" id="GO:0005829">
    <property type="term" value="C:cytosol"/>
    <property type="evidence" value="ECO:0000304"/>
    <property type="project" value="Reactome"/>
</dbReference>
<dbReference type="GO" id="GO:1990726">
    <property type="term" value="C:Lsm1-7-Pat1 complex"/>
    <property type="evidence" value="ECO:0000318"/>
    <property type="project" value="GO_Central"/>
</dbReference>
<dbReference type="GO" id="GO:0005634">
    <property type="term" value="C:nucleus"/>
    <property type="evidence" value="ECO:0000314"/>
    <property type="project" value="MGI"/>
</dbReference>
<dbReference type="GO" id="GO:0000932">
    <property type="term" value="C:P-body"/>
    <property type="evidence" value="ECO:0000318"/>
    <property type="project" value="GO_Central"/>
</dbReference>
<dbReference type="GO" id="GO:1990904">
    <property type="term" value="C:ribonucleoprotein complex"/>
    <property type="evidence" value="ECO:0007669"/>
    <property type="project" value="UniProtKB-KW"/>
</dbReference>
<dbReference type="GO" id="GO:0003729">
    <property type="term" value="F:mRNA binding"/>
    <property type="evidence" value="ECO:0000318"/>
    <property type="project" value="GO_Central"/>
</dbReference>
<dbReference type="GO" id="GO:0003723">
    <property type="term" value="F:RNA binding"/>
    <property type="evidence" value="ECO:0007005"/>
    <property type="project" value="UniProtKB"/>
</dbReference>
<dbReference type="GO" id="GO:0000290">
    <property type="term" value="P:deadenylation-dependent decapping of nuclear-transcribed mRNA"/>
    <property type="evidence" value="ECO:0000318"/>
    <property type="project" value="GO_Central"/>
</dbReference>
<dbReference type="GO" id="GO:0071044">
    <property type="term" value="P:histone mRNA catabolic process"/>
    <property type="evidence" value="ECO:0000315"/>
    <property type="project" value="UniProtKB"/>
</dbReference>
<dbReference type="GO" id="GO:0006397">
    <property type="term" value="P:mRNA processing"/>
    <property type="evidence" value="ECO:0000304"/>
    <property type="project" value="ProtInc"/>
</dbReference>
<dbReference type="GO" id="GO:0045665">
    <property type="term" value="P:negative regulation of neuron differentiation"/>
    <property type="evidence" value="ECO:0007669"/>
    <property type="project" value="Ensembl"/>
</dbReference>
<dbReference type="GO" id="GO:0030182">
    <property type="term" value="P:neuron differentiation"/>
    <property type="evidence" value="ECO:0007669"/>
    <property type="project" value="Ensembl"/>
</dbReference>
<dbReference type="GO" id="GO:0008380">
    <property type="term" value="P:RNA splicing"/>
    <property type="evidence" value="ECO:0000304"/>
    <property type="project" value="ProtInc"/>
</dbReference>
<dbReference type="GO" id="GO:0000375">
    <property type="term" value="P:RNA splicing, via transesterification reactions"/>
    <property type="evidence" value="ECO:0000304"/>
    <property type="project" value="UniProtKB"/>
</dbReference>
<dbReference type="GO" id="GO:0019827">
    <property type="term" value="P:stem cell population maintenance"/>
    <property type="evidence" value="ECO:0007669"/>
    <property type="project" value="Ensembl"/>
</dbReference>
<dbReference type="CDD" id="cd01728">
    <property type="entry name" value="LSm1"/>
    <property type="match status" value="1"/>
</dbReference>
<dbReference type="FunFam" id="2.30.30.100:FF:000021">
    <property type="entry name" value="U6 snRNA-associated Sm-like protein LSm1"/>
    <property type="match status" value="1"/>
</dbReference>
<dbReference type="Gene3D" id="2.30.30.100">
    <property type="match status" value="1"/>
</dbReference>
<dbReference type="InterPro" id="IPR034104">
    <property type="entry name" value="Lsm1"/>
</dbReference>
<dbReference type="InterPro" id="IPR010920">
    <property type="entry name" value="LSM_dom_sf"/>
</dbReference>
<dbReference type="InterPro" id="IPR044642">
    <property type="entry name" value="PTHR15588"/>
</dbReference>
<dbReference type="InterPro" id="IPR047575">
    <property type="entry name" value="Sm"/>
</dbReference>
<dbReference type="InterPro" id="IPR001163">
    <property type="entry name" value="Sm_dom_euk/arc"/>
</dbReference>
<dbReference type="PANTHER" id="PTHR15588">
    <property type="entry name" value="LSM1"/>
    <property type="match status" value="1"/>
</dbReference>
<dbReference type="PANTHER" id="PTHR15588:SF8">
    <property type="entry name" value="U6 SNRNA-ASSOCIATED SM-LIKE PROTEIN LSM1"/>
    <property type="match status" value="1"/>
</dbReference>
<dbReference type="Pfam" id="PF01423">
    <property type="entry name" value="LSM"/>
    <property type="match status" value="1"/>
</dbReference>
<dbReference type="SMART" id="SM00651">
    <property type="entry name" value="Sm"/>
    <property type="match status" value="1"/>
</dbReference>
<dbReference type="SUPFAM" id="SSF50182">
    <property type="entry name" value="Sm-like ribonucleoproteins"/>
    <property type="match status" value="1"/>
</dbReference>
<dbReference type="PROSITE" id="PS52002">
    <property type="entry name" value="SM"/>
    <property type="match status" value="1"/>
</dbReference>
<organism>
    <name type="scientific">Homo sapiens</name>
    <name type="common">Human</name>
    <dbReference type="NCBI Taxonomy" id="9606"/>
    <lineage>
        <taxon>Eukaryota</taxon>
        <taxon>Metazoa</taxon>
        <taxon>Chordata</taxon>
        <taxon>Craniata</taxon>
        <taxon>Vertebrata</taxon>
        <taxon>Euteleostomi</taxon>
        <taxon>Mammalia</taxon>
        <taxon>Eutheria</taxon>
        <taxon>Euarchontoglires</taxon>
        <taxon>Primates</taxon>
        <taxon>Haplorrhini</taxon>
        <taxon>Catarrhini</taxon>
        <taxon>Hominidae</taxon>
        <taxon>Homo</taxon>
    </lineage>
</organism>